<feature type="chain" id="PRO_0000152064" description="Leucine--tRNA ligase">
    <location>
        <begin position="1"/>
        <end position="878"/>
    </location>
</feature>
<feature type="short sequence motif" description="'HIGH' region">
    <location>
        <begin position="56"/>
        <end position="66"/>
    </location>
</feature>
<feature type="short sequence motif" description="'KMSKS' region">
    <location>
        <begin position="630"/>
        <end position="634"/>
    </location>
</feature>
<feature type="binding site" evidence="1">
    <location>
        <position position="633"/>
    </location>
    <ligand>
        <name>ATP</name>
        <dbReference type="ChEBI" id="CHEBI:30616"/>
    </ligand>
</feature>
<proteinExistence type="inferred from homology"/>
<protein>
    <recommendedName>
        <fullName evidence="1">Leucine--tRNA ligase</fullName>
        <ecNumber evidence="1">6.1.1.4</ecNumber>
    </recommendedName>
    <alternativeName>
        <fullName evidence="1">Leucyl-tRNA synthetase</fullName>
        <shortName evidence="1">LeuRS</shortName>
    </alternativeName>
</protein>
<name>SYL_PROMM</name>
<evidence type="ECO:0000255" key="1">
    <source>
        <dbReference type="HAMAP-Rule" id="MF_00049"/>
    </source>
</evidence>
<comment type="catalytic activity">
    <reaction evidence="1">
        <text>tRNA(Leu) + L-leucine + ATP = L-leucyl-tRNA(Leu) + AMP + diphosphate</text>
        <dbReference type="Rhea" id="RHEA:11688"/>
        <dbReference type="Rhea" id="RHEA-COMP:9613"/>
        <dbReference type="Rhea" id="RHEA-COMP:9622"/>
        <dbReference type="ChEBI" id="CHEBI:30616"/>
        <dbReference type="ChEBI" id="CHEBI:33019"/>
        <dbReference type="ChEBI" id="CHEBI:57427"/>
        <dbReference type="ChEBI" id="CHEBI:78442"/>
        <dbReference type="ChEBI" id="CHEBI:78494"/>
        <dbReference type="ChEBI" id="CHEBI:456215"/>
        <dbReference type="EC" id="6.1.1.4"/>
    </reaction>
</comment>
<comment type="subcellular location">
    <subcellularLocation>
        <location evidence="1">Cytoplasm</location>
    </subcellularLocation>
</comment>
<comment type="similarity">
    <text evidence="1">Belongs to the class-I aminoacyl-tRNA synthetase family.</text>
</comment>
<keyword id="KW-0030">Aminoacyl-tRNA synthetase</keyword>
<keyword id="KW-0067">ATP-binding</keyword>
<keyword id="KW-0963">Cytoplasm</keyword>
<keyword id="KW-0436">Ligase</keyword>
<keyword id="KW-0547">Nucleotide-binding</keyword>
<keyword id="KW-0648">Protein biosynthesis</keyword>
<keyword id="KW-1185">Reference proteome</keyword>
<dbReference type="EC" id="6.1.1.4" evidence="1"/>
<dbReference type="EMBL" id="BX548175">
    <property type="protein sequence ID" value="CAE20890.1"/>
    <property type="molecule type" value="Genomic_DNA"/>
</dbReference>
<dbReference type="RefSeq" id="WP_011130093.1">
    <property type="nucleotide sequence ID" value="NC_005071.1"/>
</dbReference>
<dbReference type="SMR" id="Q7TV01"/>
<dbReference type="KEGG" id="pmt:PMT_0715"/>
<dbReference type="eggNOG" id="COG0495">
    <property type="taxonomic scope" value="Bacteria"/>
</dbReference>
<dbReference type="HOGENOM" id="CLU_004427_0_0_3"/>
<dbReference type="OrthoDB" id="9810365at2"/>
<dbReference type="Proteomes" id="UP000001423">
    <property type="component" value="Chromosome"/>
</dbReference>
<dbReference type="GO" id="GO:0005829">
    <property type="term" value="C:cytosol"/>
    <property type="evidence" value="ECO:0007669"/>
    <property type="project" value="TreeGrafter"/>
</dbReference>
<dbReference type="GO" id="GO:0002161">
    <property type="term" value="F:aminoacyl-tRNA deacylase activity"/>
    <property type="evidence" value="ECO:0007669"/>
    <property type="project" value="InterPro"/>
</dbReference>
<dbReference type="GO" id="GO:0005524">
    <property type="term" value="F:ATP binding"/>
    <property type="evidence" value="ECO:0007669"/>
    <property type="project" value="UniProtKB-UniRule"/>
</dbReference>
<dbReference type="GO" id="GO:0004823">
    <property type="term" value="F:leucine-tRNA ligase activity"/>
    <property type="evidence" value="ECO:0007669"/>
    <property type="project" value="UniProtKB-UniRule"/>
</dbReference>
<dbReference type="GO" id="GO:0006429">
    <property type="term" value="P:leucyl-tRNA aminoacylation"/>
    <property type="evidence" value="ECO:0007669"/>
    <property type="project" value="UniProtKB-UniRule"/>
</dbReference>
<dbReference type="CDD" id="cd07958">
    <property type="entry name" value="Anticodon_Ia_Leu_BEm"/>
    <property type="match status" value="1"/>
</dbReference>
<dbReference type="CDD" id="cd00812">
    <property type="entry name" value="LeuRS_core"/>
    <property type="match status" value="1"/>
</dbReference>
<dbReference type="FunFam" id="3.40.50.620:FF:000003">
    <property type="entry name" value="Leucine--tRNA ligase"/>
    <property type="match status" value="1"/>
</dbReference>
<dbReference type="FunFam" id="1.10.730.10:FF:000011">
    <property type="entry name" value="Leucine--tRNA ligase chloroplastic/mitochondrial"/>
    <property type="match status" value="1"/>
</dbReference>
<dbReference type="FunFam" id="3.40.50.620:FF:000100">
    <property type="entry name" value="probable leucine--tRNA ligase, mitochondrial"/>
    <property type="match status" value="1"/>
</dbReference>
<dbReference type="Gene3D" id="3.40.50.620">
    <property type="entry name" value="HUPs"/>
    <property type="match status" value="2"/>
</dbReference>
<dbReference type="Gene3D" id="1.10.730.10">
    <property type="entry name" value="Isoleucyl-tRNA Synthetase, Domain 1"/>
    <property type="match status" value="2"/>
</dbReference>
<dbReference type="HAMAP" id="MF_00049_B">
    <property type="entry name" value="Leu_tRNA_synth_B"/>
    <property type="match status" value="1"/>
</dbReference>
<dbReference type="InterPro" id="IPR001412">
    <property type="entry name" value="aa-tRNA-synth_I_CS"/>
</dbReference>
<dbReference type="InterPro" id="IPR002300">
    <property type="entry name" value="aa-tRNA-synth_Ia"/>
</dbReference>
<dbReference type="InterPro" id="IPR002302">
    <property type="entry name" value="Leu-tRNA-ligase"/>
</dbReference>
<dbReference type="InterPro" id="IPR025709">
    <property type="entry name" value="Leu_tRNA-synth_edit"/>
</dbReference>
<dbReference type="InterPro" id="IPR013155">
    <property type="entry name" value="M/V/L/I-tRNA-synth_anticd-bd"/>
</dbReference>
<dbReference type="InterPro" id="IPR015413">
    <property type="entry name" value="Methionyl/Leucyl_tRNA_Synth"/>
</dbReference>
<dbReference type="InterPro" id="IPR014729">
    <property type="entry name" value="Rossmann-like_a/b/a_fold"/>
</dbReference>
<dbReference type="InterPro" id="IPR009080">
    <property type="entry name" value="tRNAsynth_Ia_anticodon-bd"/>
</dbReference>
<dbReference type="InterPro" id="IPR009008">
    <property type="entry name" value="Val/Leu/Ile-tRNA-synth_edit"/>
</dbReference>
<dbReference type="NCBIfam" id="TIGR00396">
    <property type="entry name" value="leuS_bact"/>
    <property type="match status" value="1"/>
</dbReference>
<dbReference type="PANTHER" id="PTHR43740:SF2">
    <property type="entry name" value="LEUCINE--TRNA LIGASE, MITOCHONDRIAL"/>
    <property type="match status" value="1"/>
</dbReference>
<dbReference type="PANTHER" id="PTHR43740">
    <property type="entry name" value="LEUCYL-TRNA SYNTHETASE"/>
    <property type="match status" value="1"/>
</dbReference>
<dbReference type="Pfam" id="PF08264">
    <property type="entry name" value="Anticodon_1"/>
    <property type="match status" value="1"/>
</dbReference>
<dbReference type="Pfam" id="PF00133">
    <property type="entry name" value="tRNA-synt_1"/>
    <property type="match status" value="2"/>
</dbReference>
<dbReference type="Pfam" id="PF13603">
    <property type="entry name" value="tRNA-synt_1_2"/>
    <property type="match status" value="1"/>
</dbReference>
<dbReference type="Pfam" id="PF09334">
    <property type="entry name" value="tRNA-synt_1g"/>
    <property type="match status" value="1"/>
</dbReference>
<dbReference type="PRINTS" id="PR00985">
    <property type="entry name" value="TRNASYNTHLEU"/>
</dbReference>
<dbReference type="SUPFAM" id="SSF47323">
    <property type="entry name" value="Anticodon-binding domain of a subclass of class I aminoacyl-tRNA synthetases"/>
    <property type="match status" value="1"/>
</dbReference>
<dbReference type="SUPFAM" id="SSF52374">
    <property type="entry name" value="Nucleotidylyl transferase"/>
    <property type="match status" value="1"/>
</dbReference>
<dbReference type="SUPFAM" id="SSF50677">
    <property type="entry name" value="ValRS/IleRS/LeuRS editing domain"/>
    <property type="match status" value="1"/>
</dbReference>
<dbReference type="PROSITE" id="PS00178">
    <property type="entry name" value="AA_TRNA_LIGASE_I"/>
    <property type="match status" value="1"/>
</dbReference>
<organism>
    <name type="scientific">Prochlorococcus marinus (strain MIT 9313)</name>
    <dbReference type="NCBI Taxonomy" id="74547"/>
    <lineage>
        <taxon>Bacteria</taxon>
        <taxon>Bacillati</taxon>
        <taxon>Cyanobacteriota</taxon>
        <taxon>Cyanophyceae</taxon>
        <taxon>Synechococcales</taxon>
        <taxon>Prochlorococcaceae</taxon>
        <taxon>Prochlorococcus</taxon>
    </lineage>
</organism>
<gene>
    <name evidence="1" type="primary">leuS</name>
    <name type="ordered locus">PMT_0715</name>
</gene>
<accession>Q7TV01</accession>
<reference key="1">
    <citation type="journal article" date="2003" name="Nature">
        <title>Genome divergence in two Prochlorococcus ecotypes reflects oceanic niche differentiation.</title>
        <authorList>
            <person name="Rocap G."/>
            <person name="Larimer F.W."/>
            <person name="Lamerdin J.E."/>
            <person name="Malfatti S."/>
            <person name="Chain P."/>
            <person name="Ahlgren N.A."/>
            <person name="Arellano A."/>
            <person name="Coleman M."/>
            <person name="Hauser L."/>
            <person name="Hess W.R."/>
            <person name="Johnson Z.I."/>
            <person name="Land M.L."/>
            <person name="Lindell D."/>
            <person name="Post A.F."/>
            <person name="Regala W."/>
            <person name="Shah M."/>
            <person name="Shaw S.L."/>
            <person name="Steglich C."/>
            <person name="Sullivan M.B."/>
            <person name="Ting C.S."/>
            <person name="Tolonen A."/>
            <person name="Webb E.A."/>
            <person name="Zinser E.R."/>
            <person name="Chisholm S.W."/>
        </authorList>
    </citation>
    <scope>NUCLEOTIDE SEQUENCE [LARGE SCALE GENOMIC DNA]</scope>
    <source>
        <strain>MIT 9313</strain>
    </source>
</reference>
<sequence length="878" mass="98558">MTESFPSTSASSQSSARYDPIELETRWQKEWLRQGLDRTPVAETNQKRFYALSMFPYPSGKLHMGHVRNYVITDVIARVQRMRGDAVLHPMGWDAFGLPAENAAIARNVDPGDWTDQNIAQMRAQLDRLGLSIDWDRQQATCHQDYYRWTQWLFLELFAGGLAYQKEATVNWDPVDKTVLANEQVDGEGRSWRSGALVEQRQLKQWFLRITDYADALIDDLDELTGWPERVRTMQANWIGRSHGAEIKFRVAGVANSIITVFTTRPDTLHGASYVVLAPEHPLVESLTSPEQRLAVTAFCDLISQLSVKDRTAEDQPKRGVPIGAQVINPVNGESLPVWIADYVLADYGSGAVMGVPAHDERDFIFARSHELPIRIVVQLPDTDEHHNDGQAWTGAGVLVNSGAFDGLSTEEAKVAITTHGASEGWAQSKVQYRLRDWLISRQRYWGCPIPIIHCASCGIVPVPQEDLPVTLPRDIDLSGKGGSPIAQEQAWVEVKCPICGEKAHRETDTMDTFMCSSWYYLRFADPLNSQRPFDKDIVDEWLPVDQYVGGIEHAILHLLYARFFTKALHDRNLIGFKEPFNRLLTQGMVQGLTYRNAKNGSYISPELVSDDSDPRDPESGDRLEVLFEKMSKSKYNGVDPAVVIDRYGADTARMFILFKAPPEKDLEWDDADVEGQFRFLQRLIRLIDSFAWPKTDGENASISSANLIIDSADLSEEEINMRRATHKAIEAITEDLSGDIQLNTAISELMKLSNSLSGKLDKVRNEVAAEALSVLVRLMAPFAPHLAEEFWLKLHGHGSIHQQSWPVIDPSALVLETIELVIQVKGKVRGKIQVPANADKKTLEELALNSDIAVKWLEGQSPRRIIIVPGKLVNLVP</sequence>